<proteinExistence type="evidence at protein level"/>
<keyword id="KW-1217">Cell adhesion impairing toxin</keyword>
<keyword id="KW-0903">Direct protein sequencing</keyword>
<keyword id="KW-1015">Disulfide bond</keyword>
<keyword id="KW-1199">Hemostasis impairing toxin</keyword>
<keyword id="KW-1201">Platelet aggregation inhibiting toxin</keyword>
<keyword id="KW-0964">Secreted</keyword>
<keyword id="KW-0800">Toxin</keyword>
<reference key="1">
    <citation type="journal article" date="2006" name="Toxicol. Appl. Pharmacol.">
        <title>Isolation and characterization of two disintegrins inhibiting ADP-induced human platelet aggregation from the venom of Crotalus scutulatus scutulatus (Mohave Rattlesnake).</title>
        <authorList>
            <person name="Sanchez E.E."/>
            <person name="Galan J.A."/>
            <person name="Russell W.K."/>
            <person name="Soto J.G."/>
            <person name="Russell D.H."/>
            <person name="Perez J.C."/>
        </authorList>
    </citation>
    <scope>PROTEIN SEQUENCE</scope>
    <scope>FUNCTION</scope>
    <scope>MASS SPECTROMETRY</scope>
    <scope>SUBCELLULAR LOCATION</scope>
    <source>
        <tissue>Venom</tissue>
    </source>
</reference>
<reference key="2">
    <citation type="journal article" date="2010" name="Thromb. Res.">
        <title>Cloning, expression, and hemostatic activities of a disintegrin, r-mojastin 1, from the mohave rattlesnake (Crotalus scutulatus scutulatus).</title>
        <authorList>
            <person name="Sanchez E.E."/>
            <person name="Lucena S.E."/>
            <person name="Reyes S.R."/>
            <person name="Soto J.G."/>
            <person name="Cantu E."/>
            <person name="Lopez-Johnston J.C."/>
            <person name="Guerrero B."/>
            <person name="Salazar A.M."/>
            <person name="Rodriguez-Acosta A."/>
            <person name="Galan J.A."/>
            <person name="Tao W.A."/>
            <person name="Perez J.C."/>
        </authorList>
    </citation>
    <scope>NUCLEOTIDE SEQUENCE [MRNA] OF 3-73</scope>
    <scope>PROTEIN SEQUENCE OF 23-39 AND 52-68</scope>
    <scope>FUNCTION</scope>
    <scope>IDENTIFICATION BY MASS SPECTROMETRY</scope>
    <scope>SUBCELLULAR LOCATION</scope>
    <source>
        <tissue>Venom</tissue>
        <tissue>Venom gland</tissue>
    </source>
</reference>
<reference key="3">
    <citation type="journal article" date="2007" name="Gene">
        <title>Molecular evolution of PIII-SVMP and RGD disintegrin genes from the genus Crotalus.</title>
        <authorList>
            <person name="Soto J.G."/>
            <person name="White S.A."/>
            <person name="Reyes S.R."/>
            <person name="Regalado R."/>
            <person name="Sanchez E.E."/>
            <person name="Perez J.C."/>
        </authorList>
    </citation>
    <scope>NUCLEOTIDE SEQUENCE [MRNA] OF 13-73</scope>
    <source>
        <tissue>Venom gland</tissue>
    </source>
</reference>
<evidence type="ECO:0000250" key="1"/>
<evidence type="ECO:0000250" key="2">
    <source>
        <dbReference type="UniProtKB" id="Q0NZX5"/>
    </source>
</evidence>
<evidence type="ECO:0000255" key="3">
    <source>
        <dbReference type="PROSITE-ProRule" id="PRU00068"/>
    </source>
</evidence>
<evidence type="ECO:0000269" key="4">
    <source>
    </source>
</evidence>
<evidence type="ECO:0000269" key="5">
    <source>
    </source>
</evidence>
<evidence type="ECO:0000305" key="6"/>
<evidence type="ECO:0000305" key="7">
    <source>
    </source>
</evidence>
<evidence type="ECO:0000305" key="8">
    <source>
    </source>
</evidence>
<feature type="chain" id="PRO_0000345026" description="Disintegrin mojastin-2" evidence="4">
    <location>
        <begin position="1"/>
        <end position="73"/>
    </location>
</feature>
<feature type="chain" id="PRO_0000345027" description="Disintegrin mojastin-1" evidence="4">
    <location>
        <begin position="3"/>
        <end position="73"/>
    </location>
</feature>
<feature type="domain" description="Disintegrin" evidence="3">
    <location>
        <begin position="1"/>
        <end position="73"/>
    </location>
</feature>
<feature type="short sequence motif" description="Cell attachment site">
    <location>
        <begin position="51"/>
        <end position="53"/>
    </location>
</feature>
<feature type="disulfide bond" evidence="2">
    <location>
        <begin position="6"/>
        <end position="21"/>
    </location>
</feature>
<feature type="disulfide bond" evidence="2">
    <location>
        <begin position="8"/>
        <end position="16"/>
    </location>
</feature>
<feature type="disulfide bond" evidence="2">
    <location>
        <begin position="15"/>
        <end position="38"/>
    </location>
</feature>
<feature type="disulfide bond" evidence="2">
    <location>
        <begin position="29"/>
        <end position="35"/>
    </location>
</feature>
<feature type="disulfide bond" evidence="2">
    <location>
        <begin position="34"/>
        <end position="59"/>
    </location>
</feature>
<feature type="disulfide bond" evidence="2 3">
    <location>
        <begin position="47"/>
        <end position="66"/>
    </location>
</feature>
<comment type="function">
    <molecule>Disintegrin mojastin-1</molecule>
    <text evidence="5">Inhibits the three processes involved in platelet function (adhesion, activation and aggregation). It inhibits platelet adhesion to fibronectin with an IC(50) of 58.6 nM. It inhibits ATP release from platelet induced by ADP with an IC(50) of 19.5 nM on platelet-rich plasma, probably by binding to ADP receptors (P2RY1 and P2RY12). Finally, it inhibits ADP-induced platelet aggregation with IC(50) of 44.7 nM on platelet-rich plasma and 19.3 nM on whole blood, probably by binding to alpha-IIb/beta-3 (ITGA2B/ITGB3) (PubMed:20598348).</text>
</comment>
<comment type="function">
    <molecule>Disintegrin mojastin-2</molecule>
    <text evidence="4">Inhibits ADP-induced platelet aggregation (IC(50) = 13.8 nM) probably by binding to alpha-IIb/beta-3 (ITGA2B/ITGB3) located on the platelet surface.</text>
</comment>
<comment type="subunit">
    <text evidence="1">Monomer (disintegrin).</text>
</comment>
<comment type="subcellular location">
    <subcellularLocation>
        <location evidence="4 5">Secreted</location>
    </subcellularLocation>
</comment>
<comment type="tissue specificity">
    <text evidence="7 8">Expressed by the venom gland.</text>
</comment>
<comment type="mass spectrometry" mass="7636.0" method="MALDI" evidence="4">
    <molecule>Disintegrin mojastin-2</molecule>
</comment>
<comment type="mass spectrometry" mass="7436.0" method="MALDI" evidence="4">
    <molecule>Disintegrin mojastin-1</molecule>
</comment>
<comment type="miscellaneous">
    <text>The disintegrin belongs to the medium disintegrin subfamily.</text>
</comment>
<comment type="similarity">
    <text evidence="6">Belongs to the venom metalloproteinase (M12B) family. P-II subfamily. P-IIa sub-subfamily.</text>
</comment>
<name>VM212_CROSS</name>
<accession>P0C7X7</accession>
<accession>A2CJE7</accession>
<accession>D0EUY8</accession>
<organism>
    <name type="scientific">Crotalus scutulatus scutulatus</name>
    <name type="common">Mojave rattlesnake</name>
    <dbReference type="NCBI Taxonomy" id="8738"/>
    <lineage>
        <taxon>Eukaryota</taxon>
        <taxon>Metazoa</taxon>
        <taxon>Chordata</taxon>
        <taxon>Craniata</taxon>
        <taxon>Vertebrata</taxon>
        <taxon>Euteleostomi</taxon>
        <taxon>Lepidosauria</taxon>
        <taxon>Squamata</taxon>
        <taxon>Bifurcata</taxon>
        <taxon>Unidentata</taxon>
        <taxon>Episquamata</taxon>
        <taxon>Toxicofera</taxon>
        <taxon>Serpentes</taxon>
        <taxon>Colubroidea</taxon>
        <taxon>Viperidae</taxon>
        <taxon>Crotalinae</taxon>
        <taxon>Crotalus</taxon>
    </lineage>
</organism>
<protein>
    <recommendedName>
        <fullName>Disintegrin mojastin-2</fullName>
    </recommendedName>
    <component>
        <recommendedName>
            <fullName>Disintegrin mojastin-1</fullName>
        </recommendedName>
    </component>
</protein>
<dbReference type="EMBL" id="GQ891042">
    <property type="protein sequence ID" value="ACX42437.1"/>
    <property type="molecule type" value="mRNA"/>
</dbReference>
<dbReference type="EMBL" id="DQ677629">
    <property type="protein sequence ID" value="ABG77588.1"/>
    <property type="molecule type" value="mRNA"/>
</dbReference>
<dbReference type="SMR" id="P0C7X7"/>
<dbReference type="TopDownProteomics" id="P0C7X7"/>
<dbReference type="GO" id="GO:0005576">
    <property type="term" value="C:extracellular region"/>
    <property type="evidence" value="ECO:0007669"/>
    <property type="project" value="UniProtKB-SubCell"/>
</dbReference>
<dbReference type="GO" id="GO:0090729">
    <property type="term" value="F:toxin activity"/>
    <property type="evidence" value="ECO:0007669"/>
    <property type="project" value="UniProtKB-KW"/>
</dbReference>
<dbReference type="FunFam" id="4.10.70.10:FF:000005">
    <property type="entry name" value="Zinc metalloproteinase/disintegrin"/>
    <property type="match status" value="1"/>
</dbReference>
<dbReference type="Gene3D" id="4.10.70.10">
    <property type="entry name" value="Disintegrin domain"/>
    <property type="match status" value="1"/>
</dbReference>
<dbReference type="InterPro" id="IPR018358">
    <property type="entry name" value="Disintegrin_CS"/>
</dbReference>
<dbReference type="InterPro" id="IPR001762">
    <property type="entry name" value="Disintegrin_dom"/>
</dbReference>
<dbReference type="InterPro" id="IPR036436">
    <property type="entry name" value="Disintegrin_dom_sf"/>
</dbReference>
<dbReference type="PANTHER" id="PTHR11905">
    <property type="entry name" value="ADAM A DISINTEGRIN AND METALLOPROTEASE DOMAIN"/>
    <property type="match status" value="1"/>
</dbReference>
<dbReference type="PANTHER" id="PTHR11905:SF159">
    <property type="entry name" value="ADAM METALLOPROTEASE"/>
    <property type="match status" value="1"/>
</dbReference>
<dbReference type="Pfam" id="PF00200">
    <property type="entry name" value="Disintegrin"/>
    <property type="match status" value="1"/>
</dbReference>
<dbReference type="PRINTS" id="PR00289">
    <property type="entry name" value="DISINTEGRIN"/>
</dbReference>
<dbReference type="SMART" id="SM00050">
    <property type="entry name" value="DISIN"/>
    <property type="match status" value="1"/>
</dbReference>
<dbReference type="SUPFAM" id="SSF57552">
    <property type="entry name" value="Blood coagulation inhibitor (disintegrin)"/>
    <property type="match status" value="1"/>
</dbReference>
<dbReference type="PROSITE" id="PS00427">
    <property type="entry name" value="DISINTEGRIN_1"/>
    <property type="match status" value="1"/>
</dbReference>
<dbReference type="PROSITE" id="PS50214">
    <property type="entry name" value="DISINTEGRIN_2"/>
    <property type="match status" value="1"/>
</dbReference>
<sequence length="73" mass="7650">EAGEECDCGSPANPCCDAATCKLRPGAQCADGLCCDQCRFIKKGTVCRPARGDWNDDTCTGQSADCPRNGLYG</sequence>